<protein>
    <recommendedName>
        <fullName>Uncharacterized protein YjeJ</fullName>
    </recommendedName>
</protein>
<sequence length="289" mass="32947">MAISIKGVNTGVIRKSNNFIALALKIKEPRNKESLFFMSVMELRDLLIALESRLHQKHKLDAAAHLQYEQARDKVIKKMAENIPEILVDELKNADINRRVNTLELTDNQGENLTFVLTLHDGSKCELVVNELQIEMLARAIIHAINNAEMRELALRITSLLDFLPLYDVDCQDNGNLEYDTYSQPEWKHNLFDHYLAVLYRFKDESGKEQFSGAVVKTREATPGKEIEAITRRMLDFSPRLKKLAGVPCQVYVRTVAANNAQPLTQDQCLRALHHLRVQSTSKTAPQAK</sequence>
<name>YJEJ_ECOLI</name>
<reference key="1">
    <citation type="journal article" date="1995" name="Nucleic Acids Res.">
        <title>Analysis of the Escherichia coli genome VI: DNA sequence of the region from 92.8 through 100 minutes.</title>
        <authorList>
            <person name="Burland V.D."/>
            <person name="Plunkett G. III"/>
            <person name="Sofia H.J."/>
            <person name="Daniels D.L."/>
            <person name="Blattner F.R."/>
        </authorList>
    </citation>
    <scope>NUCLEOTIDE SEQUENCE [LARGE SCALE GENOMIC DNA]</scope>
    <source>
        <strain>K12 / MG1655 / ATCC 47076</strain>
    </source>
</reference>
<reference key="2">
    <citation type="journal article" date="1997" name="Science">
        <title>The complete genome sequence of Escherichia coli K-12.</title>
        <authorList>
            <person name="Blattner F.R."/>
            <person name="Plunkett G. III"/>
            <person name="Bloch C.A."/>
            <person name="Perna N.T."/>
            <person name="Burland V."/>
            <person name="Riley M."/>
            <person name="Collado-Vides J."/>
            <person name="Glasner J.D."/>
            <person name="Rode C.K."/>
            <person name="Mayhew G.F."/>
            <person name="Gregor J."/>
            <person name="Davis N.W."/>
            <person name="Kirkpatrick H.A."/>
            <person name="Goeden M.A."/>
            <person name="Rose D.J."/>
            <person name="Mau B."/>
            <person name="Shao Y."/>
        </authorList>
    </citation>
    <scope>NUCLEOTIDE SEQUENCE [LARGE SCALE GENOMIC DNA]</scope>
    <source>
        <strain>K12 / MG1655 / ATCC 47076</strain>
    </source>
</reference>
<reference key="3">
    <citation type="journal article" date="2006" name="Mol. Syst. Biol.">
        <title>Highly accurate genome sequences of Escherichia coli K-12 strains MG1655 and W3110.</title>
        <authorList>
            <person name="Hayashi K."/>
            <person name="Morooka N."/>
            <person name="Yamamoto Y."/>
            <person name="Fujita K."/>
            <person name="Isono K."/>
            <person name="Choi S."/>
            <person name="Ohtsubo E."/>
            <person name="Baba T."/>
            <person name="Wanner B.L."/>
            <person name="Mori H."/>
            <person name="Horiuchi T."/>
        </authorList>
    </citation>
    <scope>NUCLEOTIDE SEQUENCE [LARGE SCALE GENOMIC DNA]</scope>
    <source>
        <strain>K12 / W3110 / ATCC 27325 / DSM 5911</strain>
    </source>
</reference>
<accession>P39279</accession>
<accession>Q2M6F9</accession>
<organism>
    <name type="scientific">Escherichia coli (strain K12)</name>
    <dbReference type="NCBI Taxonomy" id="83333"/>
    <lineage>
        <taxon>Bacteria</taxon>
        <taxon>Pseudomonadati</taxon>
        <taxon>Pseudomonadota</taxon>
        <taxon>Gammaproteobacteria</taxon>
        <taxon>Enterobacterales</taxon>
        <taxon>Enterobacteriaceae</taxon>
        <taxon>Escherichia</taxon>
    </lineage>
</organism>
<proteinExistence type="predicted"/>
<gene>
    <name type="primary">yjeJ</name>
    <name type="ordered locus">b4145</name>
    <name type="ordered locus">JW4105</name>
</gene>
<keyword id="KW-1185">Reference proteome</keyword>
<dbReference type="EMBL" id="U14003">
    <property type="protein sequence ID" value="AAA97044.1"/>
    <property type="molecule type" value="Genomic_DNA"/>
</dbReference>
<dbReference type="EMBL" id="U00096">
    <property type="protein sequence ID" value="AAC77105.1"/>
    <property type="molecule type" value="Genomic_DNA"/>
</dbReference>
<dbReference type="EMBL" id="AP009048">
    <property type="protein sequence ID" value="BAE78147.1"/>
    <property type="molecule type" value="Genomic_DNA"/>
</dbReference>
<dbReference type="PIR" id="S56373">
    <property type="entry name" value="S56373"/>
</dbReference>
<dbReference type="RefSeq" id="NP_418569.1">
    <property type="nucleotide sequence ID" value="NC_000913.3"/>
</dbReference>
<dbReference type="RefSeq" id="WP_001008040.1">
    <property type="nucleotide sequence ID" value="NZ_LN832404.1"/>
</dbReference>
<dbReference type="BioGRID" id="4260827">
    <property type="interactions" value="15"/>
</dbReference>
<dbReference type="BioGRID" id="852955">
    <property type="interactions" value="2"/>
</dbReference>
<dbReference type="FunCoup" id="P39279">
    <property type="interactions" value="17"/>
</dbReference>
<dbReference type="IntAct" id="P39279">
    <property type="interactions" value="10"/>
</dbReference>
<dbReference type="STRING" id="511145.b4145"/>
<dbReference type="PaxDb" id="511145-b4145"/>
<dbReference type="EnsemblBacteria" id="AAC77105">
    <property type="protein sequence ID" value="AAC77105"/>
    <property type="gene ID" value="b4145"/>
</dbReference>
<dbReference type="GeneID" id="948663"/>
<dbReference type="KEGG" id="ecj:JW4105"/>
<dbReference type="KEGG" id="eco:b4145"/>
<dbReference type="KEGG" id="ecoc:C3026_22400"/>
<dbReference type="PATRIC" id="fig|511145.12.peg.4277"/>
<dbReference type="EchoBASE" id="EB2365"/>
<dbReference type="eggNOG" id="ENOG502Z8ET">
    <property type="taxonomic scope" value="Bacteria"/>
</dbReference>
<dbReference type="HOGENOM" id="CLU_962226_0_0_6"/>
<dbReference type="InParanoid" id="P39279"/>
<dbReference type="OMA" id="PLHAFYL"/>
<dbReference type="OrthoDB" id="6602592at2"/>
<dbReference type="PhylomeDB" id="P39279"/>
<dbReference type="BioCyc" id="EcoCyc:G7835-MONOMER"/>
<dbReference type="PRO" id="PR:P39279"/>
<dbReference type="Proteomes" id="UP000000625">
    <property type="component" value="Chromosome"/>
</dbReference>
<dbReference type="InterPro" id="IPR031810">
    <property type="entry name" value="YjeJ-like"/>
</dbReference>
<dbReference type="Pfam" id="PF15922">
    <property type="entry name" value="YjeJ"/>
    <property type="match status" value="1"/>
</dbReference>
<feature type="chain" id="PRO_0000169739" description="Uncharacterized protein YjeJ">
    <location>
        <begin position="1"/>
        <end position="289"/>
    </location>
</feature>